<reference key="1">
    <citation type="submission" date="2002-09" db="EMBL/GenBank/DDBJ databases">
        <title>Phylogenetic relationships among the major lineages of Asparagales based on a large chloroplast data set.</title>
        <authorList>
            <person name="McPherson M.A."/>
            <person name="Rai H.S."/>
            <person name="Wong W.A."/>
            <person name="Graham S.W."/>
        </authorList>
    </citation>
    <scope>NUCLEOTIDE SEQUENCE [GENOMIC DNA]</scope>
</reference>
<geneLocation type="chloroplast"/>
<protein>
    <recommendedName>
        <fullName evidence="1">Cytochrome b559 subunit beta</fullName>
    </recommendedName>
    <alternativeName>
        <fullName evidence="1">PSII reaction center subunit VI</fullName>
    </alternativeName>
</protein>
<gene>
    <name evidence="1" type="primary">psbF</name>
</gene>
<organism>
    <name type="scientific">Maianthemum racemosum</name>
    <name type="common">False Solomon's-seal</name>
    <name type="synonym">Smilacina racemosa</name>
    <dbReference type="NCBI Taxonomy" id="39530"/>
    <lineage>
        <taxon>Eukaryota</taxon>
        <taxon>Viridiplantae</taxon>
        <taxon>Streptophyta</taxon>
        <taxon>Embryophyta</taxon>
        <taxon>Tracheophyta</taxon>
        <taxon>Spermatophyta</taxon>
        <taxon>Magnoliopsida</taxon>
        <taxon>Liliopsida</taxon>
        <taxon>Asparagales</taxon>
        <taxon>Asparagaceae</taxon>
        <taxon>Nolinoideae</taxon>
        <taxon>Maianthemum</taxon>
    </lineage>
</organism>
<name>PSBF_MAIRA</name>
<evidence type="ECO:0000255" key="1">
    <source>
        <dbReference type="HAMAP-Rule" id="MF_00643"/>
    </source>
</evidence>
<proteinExistence type="inferred from homology"/>
<feature type="chain" id="PRO_0000200416" description="Cytochrome b559 subunit beta">
    <location>
        <begin position="1"/>
        <end position="39"/>
    </location>
</feature>
<feature type="transmembrane region" description="Helical" evidence="1">
    <location>
        <begin position="14"/>
        <end position="30"/>
    </location>
</feature>
<feature type="binding site" description="axial binding residue" evidence="1">
    <location>
        <position position="18"/>
    </location>
    <ligand>
        <name>heme</name>
        <dbReference type="ChEBI" id="CHEBI:30413"/>
        <note>ligand shared with alpha subunit</note>
    </ligand>
    <ligandPart>
        <name>Fe</name>
        <dbReference type="ChEBI" id="CHEBI:18248"/>
    </ligandPart>
</feature>
<accession>Q67HA1</accession>
<dbReference type="EMBL" id="AY147588">
    <property type="protein sequence ID" value="AAN32453.1"/>
    <property type="molecule type" value="Genomic_DNA"/>
</dbReference>
<dbReference type="SMR" id="Q67HA1"/>
<dbReference type="GO" id="GO:0009535">
    <property type="term" value="C:chloroplast thylakoid membrane"/>
    <property type="evidence" value="ECO:0007669"/>
    <property type="project" value="UniProtKB-SubCell"/>
</dbReference>
<dbReference type="GO" id="GO:0009539">
    <property type="term" value="C:photosystem II reaction center"/>
    <property type="evidence" value="ECO:0007669"/>
    <property type="project" value="InterPro"/>
</dbReference>
<dbReference type="GO" id="GO:0009055">
    <property type="term" value="F:electron transfer activity"/>
    <property type="evidence" value="ECO:0007669"/>
    <property type="project" value="UniProtKB-UniRule"/>
</dbReference>
<dbReference type="GO" id="GO:0020037">
    <property type="term" value="F:heme binding"/>
    <property type="evidence" value="ECO:0007669"/>
    <property type="project" value="InterPro"/>
</dbReference>
<dbReference type="GO" id="GO:0005506">
    <property type="term" value="F:iron ion binding"/>
    <property type="evidence" value="ECO:0007669"/>
    <property type="project" value="UniProtKB-UniRule"/>
</dbReference>
<dbReference type="GO" id="GO:0009767">
    <property type="term" value="P:photosynthetic electron transport chain"/>
    <property type="evidence" value="ECO:0007669"/>
    <property type="project" value="InterPro"/>
</dbReference>
<dbReference type="HAMAP" id="MF_00643">
    <property type="entry name" value="PSII_PsbF"/>
    <property type="match status" value="1"/>
</dbReference>
<dbReference type="InterPro" id="IPR006241">
    <property type="entry name" value="PSII_cyt_b559_bsu"/>
</dbReference>
<dbReference type="InterPro" id="IPR006216">
    <property type="entry name" value="PSII_cyt_b559_CS"/>
</dbReference>
<dbReference type="InterPro" id="IPR013081">
    <property type="entry name" value="PSII_cyt_b559_N"/>
</dbReference>
<dbReference type="NCBIfam" id="TIGR01333">
    <property type="entry name" value="cyt_b559_beta"/>
    <property type="match status" value="1"/>
</dbReference>
<dbReference type="Pfam" id="PF00283">
    <property type="entry name" value="Cytochrom_B559"/>
    <property type="match status" value="1"/>
</dbReference>
<dbReference type="PIRSF" id="PIRSF000037">
    <property type="entry name" value="PsbF"/>
    <property type="match status" value="1"/>
</dbReference>
<dbReference type="SUPFAM" id="SSF161045">
    <property type="entry name" value="Cytochrome b559 subunits"/>
    <property type="match status" value="1"/>
</dbReference>
<dbReference type="PROSITE" id="PS00537">
    <property type="entry name" value="CYTOCHROME_B559"/>
    <property type="match status" value="1"/>
</dbReference>
<keyword id="KW-0150">Chloroplast</keyword>
<keyword id="KW-0249">Electron transport</keyword>
<keyword id="KW-0349">Heme</keyword>
<keyword id="KW-0408">Iron</keyword>
<keyword id="KW-0472">Membrane</keyword>
<keyword id="KW-0479">Metal-binding</keyword>
<keyword id="KW-0602">Photosynthesis</keyword>
<keyword id="KW-0604">Photosystem II</keyword>
<keyword id="KW-0934">Plastid</keyword>
<keyword id="KW-0793">Thylakoid</keyword>
<keyword id="KW-0812">Transmembrane</keyword>
<keyword id="KW-1133">Transmembrane helix</keyword>
<keyword id="KW-0813">Transport</keyword>
<sequence length="39" mass="4424">MTIDRTYPIFTVRWLAVHGLAVPTVSFLGSISAMQFIQR</sequence>
<comment type="function">
    <text evidence="1">This b-type cytochrome is tightly associated with the reaction center of photosystem II (PSII). PSII is a light-driven water:plastoquinone oxidoreductase that uses light energy to abstract electrons from H(2)O, generating O(2) and a proton gradient subsequently used for ATP formation. It consists of a core antenna complex that captures photons, and an electron transfer chain that converts photonic excitation into a charge separation.</text>
</comment>
<comment type="cofactor">
    <cofactor evidence="1">
        <name>heme b</name>
        <dbReference type="ChEBI" id="CHEBI:60344"/>
    </cofactor>
    <text evidence="1">With its partner (PsbE) binds heme. PSII binds additional chlorophylls, carotenoids and specific lipids.</text>
</comment>
<comment type="subunit">
    <text evidence="1">Heterodimer of an alpha subunit and a beta subunit. PSII is composed of 1 copy each of membrane proteins PsbA, PsbB, PsbC, PsbD, PsbE, PsbF, PsbH, PsbI, PsbJ, PsbK, PsbL, PsbM, PsbT, PsbX, PsbY, PsbZ, Psb30/Ycf12, at least 3 peripheral proteins of the oxygen-evolving complex and a large number of cofactors. It forms dimeric complexes.</text>
</comment>
<comment type="subcellular location">
    <subcellularLocation>
        <location evidence="1">Plastid</location>
        <location evidence="1">Chloroplast thylakoid membrane</location>
        <topology evidence="1">Single-pass membrane protein</topology>
    </subcellularLocation>
</comment>
<comment type="similarity">
    <text evidence="1">Belongs to the PsbE/PsbF family.</text>
</comment>